<name>PDXH_AZOC5</name>
<proteinExistence type="inferred from homology"/>
<organism>
    <name type="scientific">Azorhizobium caulinodans (strain ATCC 43989 / DSM 5975 / JCM 20966 / LMG 6465 / NBRC 14845 / NCIMB 13405 / ORS 571)</name>
    <dbReference type="NCBI Taxonomy" id="438753"/>
    <lineage>
        <taxon>Bacteria</taxon>
        <taxon>Pseudomonadati</taxon>
        <taxon>Pseudomonadota</taxon>
        <taxon>Alphaproteobacteria</taxon>
        <taxon>Hyphomicrobiales</taxon>
        <taxon>Xanthobacteraceae</taxon>
        <taxon>Azorhizobium</taxon>
    </lineage>
</organism>
<dbReference type="EC" id="1.4.3.5" evidence="1"/>
<dbReference type="EMBL" id="AP009384">
    <property type="protein sequence ID" value="BAF87195.1"/>
    <property type="status" value="ALT_INIT"/>
    <property type="molecule type" value="Genomic_DNA"/>
</dbReference>
<dbReference type="RefSeq" id="WP_043878984.1">
    <property type="nucleotide sequence ID" value="NC_009937.1"/>
</dbReference>
<dbReference type="SMR" id="A8HRJ3"/>
<dbReference type="STRING" id="438753.AZC_1197"/>
<dbReference type="KEGG" id="azc:AZC_1197"/>
<dbReference type="eggNOG" id="COG0259">
    <property type="taxonomic scope" value="Bacteria"/>
</dbReference>
<dbReference type="HOGENOM" id="CLU_032263_2_3_5"/>
<dbReference type="UniPathway" id="UPA01068">
    <property type="reaction ID" value="UER00304"/>
</dbReference>
<dbReference type="UniPathway" id="UPA01068">
    <property type="reaction ID" value="UER00305"/>
</dbReference>
<dbReference type="Proteomes" id="UP000000270">
    <property type="component" value="Chromosome"/>
</dbReference>
<dbReference type="GO" id="GO:0010181">
    <property type="term" value="F:FMN binding"/>
    <property type="evidence" value="ECO:0007669"/>
    <property type="project" value="UniProtKB-UniRule"/>
</dbReference>
<dbReference type="GO" id="GO:0004733">
    <property type="term" value="F:pyridoxamine phosphate oxidase activity"/>
    <property type="evidence" value="ECO:0007669"/>
    <property type="project" value="UniProtKB-UniRule"/>
</dbReference>
<dbReference type="GO" id="GO:0008615">
    <property type="term" value="P:pyridoxine biosynthetic process"/>
    <property type="evidence" value="ECO:0007669"/>
    <property type="project" value="UniProtKB-KW"/>
</dbReference>
<dbReference type="Gene3D" id="2.30.110.10">
    <property type="entry name" value="Electron Transport, Fmn-binding Protein, Chain A"/>
    <property type="match status" value="1"/>
</dbReference>
<dbReference type="HAMAP" id="MF_01629">
    <property type="entry name" value="PdxH"/>
    <property type="match status" value="1"/>
</dbReference>
<dbReference type="InterPro" id="IPR000659">
    <property type="entry name" value="Pyridox_Oxase"/>
</dbReference>
<dbReference type="InterPro" id="IPR019740">
    <property type="entry name" value="Pyridox_Oxase_CS"/>
</dbReference>
<dbReference type="InterPro" id="IPR011576">
    <property type="entry name" value="Pyridox_Oxase_N"/>
</dbReference>
<dbReference type="InterPro" id="IPR019576">
    <property type="entry name" value="Pyridoxamine_oxidase_dimer_C"/>
</dbReference>
<dbReference type="InterPro" id="IPR012349">
    <property type="entry name" value="Split_barrel_FMN-bd"/>
</dbReference>
<dbReference type="NCBIfam" id="TIGR00558">
    <property type="entry name" value="pdxH"/>
    <property type="match status" value="1"/>
</dbReference>
<dbReference type="NCBIfam" id="NF004231">
    <property type="entry name" value="PRK05679.1"/>
    <property type="match status" value="1"/>
</dbReference>
<dbReference type="PANTHER" id="PTHR10851:SF0">
    <property type="entry name" value="PYRIDOXINE-5'-PHOSPHATE OXIDASE"/>
    <property type="match status" value="1"/>
</dbReference>
<dbReference type="PANTHER" id="PTHR10851">
    <property type="entry name" value="PYRIDOXINE-5-PHOSPHATE OXIDASE"/>
    <property type="match status" value="1"/>
</dbReference>
<dbReference type="Pfam" id="PF10590">
    <property type="entry name" value="PNP_phzG_C"/>
    <property type="match status" value="1"/>
</dbReference>
<dbReference type="Pfam" id="PF01243">
    <property type="entry name" value="PNPOx_N"/>
    <property type="match status" value="1"/>
</dbReference>
<dbReference type="PIRSF" id="PIRSF000190">
    <property type="entry name" value="Pyd_amn-ph_oxd"/>
    <property type="match status" value="1"/>
</dbReference>
<dbReference type="SUPFAM" id="SSF50475">
    <property type="entry name" value="FMN-binding split barrel"/>
    <property type="match status" value="1"/>
</dbReference>
<dbReference type="PROSITE" id="PS01064">
    <property type="entry name" value="PYRIDOX_OXIDASE"/>
    <property type="match status" value="1"/>
</dbReference>
<accession>A8HRJ3</accession>
<gene>
    <name evidence="1" type="primary">pdxH</name>
    <name type="ordered locus">AZC_1197</name>
</gene>
<evidence type="ECO:0000255" key="1">
    <source>
        <dbReference type="HAMAP-Rule" id="MF_01629"/>
    </source>
</evidence>
<evidence type="ECO:0000256" key="2">
    <source>
        <dbReference type="SAM" id="MobiDB-lite"/>
    </source>
</evidence>
<evidence type="ECO:0000305" key="3"/>
<keyword id="KW-0285">Flavoprotein</keyword>
<keyword id="KW-0288">FMN</keyword>
<keyword id="KW-0560">Oxidoreductase</keyword>
<keyword id="KW-0664">Pyridoxine biosynthesis</keyword>
<keyword id="KW-1185">Reference proteome</keyword>
<sequence length="212" mass="24177">MSDSAMEPQNPLTSGDFTAADEPFRLFSEWLKDAERSEPNDPNAMTLATVDPDGLPDARMVLLKGLDDRGFVFYTNTESAKGRELTAHPKAALVFHWKSLRRQVRVRGPVERVTDAEADAYFATRPRLSQIGAWASQQSRPLEGRFALEAAVATTTARYAVGSVPRPPHWTGFRILPVQIEFWHDRPFRLHDRVVFKRENPEIDWEKSRLYP</sequence>
<protein>
    <recommendedName>
        <fullName evidence="1">Pyridoxine/pyridoxamine 5'-phosphate oxidase</fullName>
        <ecNumber evidence="1">1.4.3.5</ecNumber>
    </recommendedName>
    <alternativeName>
        <fullName evidence="1">PNP/PMP oxidase</fullName>
        <shortName evidence="1">PNPOx</shortName>
    </alternativeName>
    <alternativeName>
        <fullName evidence="1">Pyridoxal 5'-phosphate synthase</fullName>
    </alternativeName>
</protein>
<comment type="function">
    <text evidence="1">Catalyzes the oxidation of either pyridoxine 5'-phosphate (PNP) or pyridoxamine 5'-phosphate (PMP) into pyridoxal 5'-phosphate (PLP).</text>
</comment>
<comment type="catalytic activity">
    <reaction evidence="1">
        <text>pyridoxamine 5'-phosphate + O2 + H2O = pyridoxal 5'-phosphate + H2O2 + NH4(+)</text>
        <dbReference type="Rhea" id="RHEA:15817"/>
        <dbReference type="ChEBI" id="CHEBI:15377"/>
        <dbReference type="ChEBI" id="CHEBI:15379"/>
        <dbReference type="ChEBI" id="CHEBI:16240"/>
        <dbReference type="ChEBI" id="CHEBI:28938"/>
        <dbReference type="ChEBI" id="CHEBI:58451"/>
        <dbReference type="ChEBI" id="CHEBI:597326"/>
        <dbReference type="EC" id="1.4.3.5"/>
    </reaction>
</comment>
<comment type="catalytic activity">
    <reaction evidence="1">
        <text>pyridoxine 5'-phosphate + O2 = pyridoxal 5'-phosphate + H2O2</text>
        <dbReference type="Rhea" id="RHEA:15149"/>
        <dbReference type="ChEBI" id="CHEBI:15379"/>
        <dbReference type="ChEBI" id="CHEBI:16240"/>
        <dbReference type="ChEBI" id="CHEBI:58589"/>
        <dbReference type="ChEBI" id="CHEBI:597326"/>
        <dbReference type="EC" id="1.4.3.5"/>
    </reaction>
</comment>
<comment type="cofactor">
    <cofactor evidence="1">
        <name>FMN</name>
        <dbReference type="ChEBI" id="CHEBI:58210"/>
    </cofactor>
    <text evidence="1">Binds 1 FMN per subunit.</text>
</comment>
<comment type="pathway">
    <text evidence="1">Cofactor metabolism; pyridoxal 5'-phosphate salvage; pyridoxal 5'-phosphate from pyridoxamine 5'-phosphate: step 1/1.</text>
</comment>
<comment type="pathway">
    <text evidence="1">Cofactor metabolism; pyridoxal 5'-phosphate salvage; pyridoxal 5'-phosphate from pyridoxine 5'-phosphate: step 1/1.</text>
</comment>
<comment type="subunit">
    <text evidence="1">Homodimer.</text>
</comment>
<comment type="similarity">
    <text evidence="1">Belongs to the pyridoxamine 5'-phosphate oxidase family.</text>
</comment>
<comment type="sequence caution" evidence="3">
    <conflict type="erroneous initiation">
        <sequence resource="EMBL-CDS" id="BAF87195"/>
    </conflict>
</comment>
<reference key="1">
    <citation type="submission" date="2007-04" db="EMBL/GenBank/DDBJ databases">
        <title>Complete genome sequence of the nitrogen-fixing bacterium Azorhizobium caulinodans ORS571.</title>
        <authorList>
            <person name="Lee K.B."/>
            <person name="Backer P.D."/>
            <person name="Aono T."/>
            <person name="Liu C.T."/>
            <person name="Suzuki S."/>
            <person name="Suzuki T."/>
            <person name="Kaneko T."/>
            <person name="Yamada M."/>
            <person name="Tabata S."/>
            <person name="Kupfer D.M."/>
            <person name="Najar F.Z."/>
            <person name="Wiley G.B."/>
            <person name="Roe B."/>
            <person name="Binnewies T."/>
            <person name="Ussery D."/>
            <person name="Vereecke D."/>
            <person name="Gevers D."/>
            <person name="Holsters M."/>
            <person name="Oyaizu H."/>
        </authorList>
    </citation>
    <scope>NUCLEOTIDE SEQUENCE [LARGE SCALE GENOMIC DNA]</scope>
    <source>
        <strain>ATCC 43989 / DSM 5975 / JCM 20966 / LMG 6465 / NBRC 14845 / NCIMB 13405 / ORS 571</strain>
    </source>
</reference>
<feature type="chain" id="PRO_0000335780" description="Pyridoxine/pyridoxamine 5'-phosphate oxidase">
    <location>
        <begin position="1"/>
        <end position="212"/>
    </location>
</feature>
<feature type="region of interest" description="Disordered" evidence="2">
    <location>
        <begin position="1"/>
        <end position="20"/>
    </location>
</feature>
<feature type="binding site" evidence="1">
    <location>
        <begin position="59"/>
        <end position="64"/>
    </location>
    <ligand>
        <name>FMN</name>
        <dbReference type="ChEBI" id="CHEBI:58210"/>
    </ligand>
</feature>
<feature type="binding site" evidence="1">
    <location>
        <position position="64"/>
    </location>
    <ligand>
        <name>substrate</name>
    </ligand>
</feature>
<feature type="binding site" evidence="1">
    <location>
        <begin position="74"/>
        <end position="75"/>
    </location>
    <ligand>
        <name>FMN</name>
        <dbReference type="ChEBI" id="CHEBI:58210"/>
    </ligand>
</feature>
<feature type="binding site" evidence="1">
    <location>
        <position position="81"/>
    </location>
    <ligand>
        <name>FMN</name>
        <dbReference type="ChEBI" id="CHEBI:58210"/>
    </ligand>
</feature>
<feature type="binding site" evidence="1">
    <location>
        <position position="103"/>
    </location>
    <ligand>
        <name>FMN</name>
        <dbReference type="ChEBI" id="CHEBI:58210"/>
    </ligand>
</feature>
<feature type="binding site" evidence="1">
    <location>
        <position position="121"/>
    </location>
    <ligand>
        <name>substrate</name>
    </ligand>
</feature>
<feature type="binding site" evidence="1">
    <location>
        <position position="125"/>
    </location>
    <ligand>
        <name>substrate</name>
    </ligand>
</feature>
<feature type="binding site" evidence="1">
    <location>
        <position position="129"/>
    </location>
    <ligand>
        <name>substrate</name>
    </ligand>
</feature>
<feature type="binding site" evidence="1">
    <location>
        <begin position="138"/>
        <end position="139"/>
    </location>
    <ligand>
        <name>FMN</name>
        <dbReference type="ChEBI" id="CHEBI:58210"/>
    </ligand>
</feature>
<feature type="binding site" evidence="1">
    <location>
        <position position="183"/>
    </location>
    <ligand>
        <name>FMN</name>
        <dbReference type="ChEBI" id="CHEBI:58210"/>
    </ligand>
</feature>
<feature type="binding site" evidence="1">
    <location>
        <begin position="189"/>
        <end position="191"/>
    </location>
    <ligand>
        <name>substrate</name>
    </ligand>
</feature>
<feature type="binding site" evidence="1">
    <location>
        <position position="193"/>
    </location>
    <ligand>
        <name>FMN</name>
        <dbReference type="ChEBI" id="CHEBI:58210"/>
    </ligand>
</feature>